<organism>
    <name type="scientific">Aspergillus fumigatus (strain CBS 144.89 / FGSC A1163 / CEA10)</name>
    <name type="common">Neosartorya fumigata</name>
    <dbReference type="NCBI Taxonomy" id="451804"/>
    <lineage>
        <taxon>Eukaryota</taxon>
        <taxon>Fungi</taxon>
        <taxon>Dikarya</taxon>
        <taxon>Ascomycota</taxon>
        <taxon>Pezizomycotina</taxon>
        <taxon>Eurotiomycetes</taxon>
        <taxon>Eurotiomycetidae</taxon>
        <taxon>Eurotiales</taxon>
        <taxon>Aspergillaceae</taxon>
        <taxon>Aspergillus</taxon>
        <taxon>Aspergillus subgen. Fumigati</taxon>
    </lineage>
</organism>
<name>HASH_ASPFC</name>
<proteinExistence type="evidence at transcript level"/>
<evidence type="ECO:0000250" key="1">
    <source>
        <dbReference type="UniProtKB" id="P04798"/>
    </source>
</evidence>
<evidence type="ECO:0000255" key="2"/>
<evidence type="ECO:0000269" key="3">
    <source>
    </source>
</evidence>
<evidence type="ECO:0000269" key="4">
    <source>
    </source>
</evidence>
<evidence type="ECO:0000303" key="5">
    <source>
    </source>
</evidence>
<evidence type="ECO:0000305" key="6"/>
<evidence type="ECO:0000305" key="7">
    <source>
    </source>
</evidence>
<dbReference type="EC" id="1.-.-.-" evidence="7"/>
<dbReference type="EMBL" id="DS499596">
    <property type="protein sequence ID" value="EDP52457.1"/>
    <property type="molecule type" value="Genomic_DNA"/>
</dbReference>
<dbReference type="SMR" id="B0XWK4"/>
<dbReference type="EnsemblFungi" id="EDP52457">
    <property type="protein sequence ID" value="EDP52457"/>
    <property type="gene ID" value="AFUB_036230"/>
</dbReference>
<dbReference type="HOGENOM" id="CLU_042557_2_0_1"/>
<dbReference type="OrthoDB" id="84527at5052"/>
<dbReference type="PhylomeDB" id="B0XWK4"/>
<dbReference type="Proteomes" id="UP000001699">
    <property type="component" value="Unassembled WGS sequence"/>
</dbReference>
<dbReference type="GO" id="GO:0016020">
    <property type="term" value="C:membrane"/>
    <property type="evidence" value="ECO:0007669"/>
    <property type="project" value="UniProtKB-SubCell"/>
</dbReference>
<dbReference type="GO" id="GO:0020037">
    <property type="term" value="F:heme binding"/>
    <property type="evidence" value="ECO:0007669"/>
    <property type="project" value="InterPro"/>
</dbReference>
<dbReference type="GO" id="GO:0005506">
    <property type="term" value="F:iron ion binding"/>
    <property type="evidence" value="ECO:0007669"/>
    <property type="project" value="InterPro"/>
</dbReference>
<dbReference type="GO" id="GO:0004497">
    <property type="term" value="F:monooxygenase activity"/>
    <property type="evidence" value="ECO:0007669"/>
    <property type="project" value="UniProtKB-KW"/>
</dbReference>
<dbReference type="GO" id="GO:0016705">
    <property type="term" value="F:oxidoreductase activity, acting on paired donors, with incorporation or reduction of molecular oxygen"/>
    <property type="evidence" value="ECO:0007669"/>
    <property type="project" value="InterPro"/>
</dbReference>
<dbReference type="GO" id="GO:0044283">
    <property type="term" value="P:small molecule biosynthetic process"/>
    <property type="evidence" value="ECO:0007669"/>
    <property type="project" value="UniProtKB-ARBA"/>
</dbReference>
<dbReference type="CDD" id="cd20615">
    <property type="entry name" value="CYP_GliC-like"/>
    <property type="match status" value="1"/>
</dbReference>
<dbReference type="Gene3D" id="1.10.630.10">
    <property type="entry name" value="Cytochrome P450"/>
    <property type="match status" value="1"/>
</dbReference>
<dbReference type="InterPro" id="IPR001128">
    <property type="entry name" value="Cyt_P450"/>
</dbReference>
<dbReference type="InterPro" id="IPR017972">
    <property type="entry name" value="Cyt_P450_CS"/>
</dbReference>
<dbReference type="InterPro" id="IPR002401">
    <property type="entry name" value="Cyt_P450_E_grp-I"/>
</dbReference>
<dbReference type="InterPro" id="IPR036396">
    <property type="entry name" value="Cyt_P450_sf"/>
</dbReference>
<dbReference type="InterPro" id="IPR050121">
    <property type="entry name" value="Cytochrome_P450_monoxygenase"/>
</dbReference>
<dbReference type="PANTHER" id="PTHR24305">
    <property type="entry name" value="CYTOCHROME P450"/>
    <property type="match status" value="1"/>
</dbReference>
<dbReference type="PANTHER" id="PTHR24305:SF166">
    <property type="entry name" value="CYTOCHROME P450 12A4, MITOCHONDRIAL-RELATED"/>
    <property type="match status" value="1"/>
</dbReference>
<dbReference type="Pfam" id="PF00067">
    <property type="entry name" value="p450"/>
    <property type="match status" value="1"/>
</dbReference>
<dbReference type="PRINTS" id="PR00463">
    <property type="entry name" value="EP450I"/>
</dbReference>
<dbReference type="SUPFAM" id="SSF48264">
    <property type="entry name" value="Cytochrome P450"/>
    <property type="match status" value="1"/>
</dbReference>
<dbReference type="PROSITE" id="PS00086">
    <property type="entry name" value="CYTOCHROME_P450"/>
    <property type="match status" value="1"/>
</dbReference>
<reference key="1">
    <citation type="journal article" date="2008" name="PLoS Genet.">
        <title>Genomic islands in the pathogenic filamentous fungus Aspergillus fumigatus.</title>
        <authorList>
            <person name="Fedorova N.D."/>
            <person name="Khaldi N."/>
            <person name="Joardar V.S."/>
            <person name="Maiti R."/>
            <person name="Amedeo P."/>
            <person name="Anderson M.J."/>
            <person name="Crabtree J."/>
            <person name="Silva J.C."/>
            <person name="Badger J.H."/>
            <person name="Albarraq A."/>
            <person name="Angiuoli S."/>
            <person name="Bussey H."/>
            <person name="Bowyer P."/>
            <person name="Cotty P.J."/>
            <person name="Dyer P.S."/>
            <person name="Egan A."/>
            <person name="Galens K."/>
            <person name="Fraser-Liggett C.M."/>
            <person name="Haas B.J."/>
            <person name="Inman J.M."/>
            <person name="Kent R."/>
            <person name="Lemieux S."/>
            <person name="Malavazi I."/>
            <person name="Orvis J."/>
            <person name="Roemer T."/>
            <person name="Ronning C.M."/>
            <person name="Sundaram J.P."/>
            <person name="Sutton G."/>
            <person name="Turner G."/>
            <person name="Venter J.C."/>
            <person name="White O.R."/>
            <person name="Whitty B.R."/>
            <person name="Youngman P."/>
            <person name="Wolfe K.H."/>
            <person name="Goldman G.H."/>
            <person name="Wortman J.R."/>
            <person name="Jiang B."/>
            <person name="Denning D.W."/>
            <person name="Nierman W.C."/>
        </authorList>
    </citation>
    <scope>NUCLEOTIDE SEQUENCE [LARGE SCALE GENOMIC DNA]</scope>
    <source>
        <strain>CBS 144.89 / FGSC A1163 / CEA10</strain>
    </source>
</reference>
<reference key="2">
    <citation type="journal article" date="2013" name="J. Am. Chem. Soc.">
        <title>A nonribosomal peptide synthetase-derived iron(III) complex from the pathogenic fungus Aspergillus fumigatus.</title>
        <authorList>
            <person name="Yin W.B."/>
            <person name="Baccile J.A."/>
            <person name="Bok J.W."/>
            <person name="Chen Y."/>
            <person name="Keller N.P."/>
            <person name="Schroeder F.C."/>
        </authorList>
    </citation>
    <scope>FUNCTION</scope>
    <scope>DISRUPTION PHENOTYPE</scope>
    <scope>PATHWAY</scope>
</reference>
<reference key="3">
    <citation type="journal article" date="2022" name="J. Fungi">
        <title>Stress responses elicited by glucose withdrawal in Aspergillus fumigatus.</title>
        <authorList>
            <person name="Emri T."/>
            <person name="Antal K."/>
            <person name="Gila B."/>
            <person name="Jonas A.P."/>
            <person name="Pocsi I."/>
        </authorList>
    </citation>
    <scope>INDUCTION</scope>
</reference>
<protein>
    <recommendedName>
        <fullName evidence="5">Cytochrome P450 monooxygenase hasH</fullName>
        <ecNumber evidence="7">1.-.-.-</ecNumber>
    </recommendedName>
    <alternativeName>
        <fullName evidence="5">Hexadehydro-astechrome biosynthesis cluster protein H</fullName>
    </alternativeName>
</protein>
<comment type="function">
    <text evidence="3">Cytochrome P450 monooxygenase; part of the gene cluster that mediates the biosynthesis of hexadehydro-astechrome (HAS), a tryptophan-derived iron(III)-complex that acts as a virulence factor in infected mice (PubMed:23360537). Within the pathway, hasH, with the O-methyltransferase hasC and the FAD-linked oxidoreductase hasG, convert the hasE-prenylated Trp-Ala dipeptide into an O-methylated diketopiperazine that is then released from the hasD NRPS (PubMed:23360537). The HAS biosynthesis begins with the synthesis of a tethered Trp-Ala dipeptide by the NRPS hasD. The 7-dimethylallyltryptophan synthase hasE then catalyzes the prenylation of the hasD-tethered tryptophan or the resulting tethered Trp-Ala dipeptide at the C-7 position of the indole moiety. HAS biosynthesis continues via tethered intermediates with the succesive action of the cytochrome P450 monooxygenase hasH, the O-methyltransferase hasC, and the FAD-linked oxidoreductase hasG. The resulting O-methylated diketopiperazine is then released from hasD. Finally, three O-methylated diketopiperazine molecules assemble in a trimeric complex with Fe(III) to produce hexadehydro-astechrome (PubMed:23360537).</text>
</comment>
<comment type="cofactor">
    <cofactor evidence="1">
        <name>heme</name>
        <dbReference type="ChEBI" id="CHEBI:30413"/>
    </cofactor>
</comment>
<comment type="pathway">
    <text evidence="3">Secondary metabolite biosynthesis.</text>
</comment>
<comment type="subcellular location">
    <subcellularLocation>
        <location evidence="2">Membrane</location>
        <topology evidence="2">Single-pass membrane protein</topology>
    </subcellularLocation>
</comment>
<comment type="induction">
    <text evidence="4">The expression of the hexadehydro-astechrome cluster is induced by glucose.</text>
</comment>
<comment type="disruption phenotype">
    <text evidence="3">Abolishes hexadehydro-astechrome production and instead accumulates large quantities of a single shunt metabolite, the prenylated Trp-Ala diketopiperazine, terezine D.</text>
</comment>
<comment type="similarity">
    <text evidence="6">Belongs to the cytochrome P450 family.</text>
</comment>
<feature type="chain" id="PRO_0000461231" description="Cytochrome P450 monooxygenase hasH">
    <location>
        <begin position="1"/>
        <end position="550"/>
    </location>
</feature>
<feature type="transmembrane region" description="Helical" evidence="2">
    <location>
        <begin position="39"/>
        <end position="59"/>
    </location>
</feature>
<feature type="binding site" description="axial binding residue" evidence="1">
    <location>
        <position position="493"/>
    </location>
    <ligand>
        <name>heme</name>
        <dbReference type="ChEBI" id="CHEBI:30413"/>
    </ligand>
    <ligandPart>
        <name>Fe</name>
        <dbReference type="ChEBI" id="CHEBI:18248"/>
    </ligandPart>
</feature>
<gene>
    <name evidence="5" type="primary">hasH</name>
    <name type="ORF">AFUB_036230</name>
</gene>
<accession>B0XWK4</accession>
<keyword id="KW-0349">Heme</keyword>
<keyword id="KW-0408">Iron</keyword>
<keyword id="KW-0472">Membrane</keyword>
<keyword id="KW-0479">Metal-binding</keyword>
<keyword id="KW-0503">Monooxygenase</keyword>
<keyword id="KW-0560">Oxidoreductase</keyword>
<keyword id="KW-0812">Transmembrane</keyword>
<keyword id="KW-1133">Transmembrane helix</keyword>
<keyword id="KW-0843">Virulence</keyword>
<sequence>MQKGPCGTELGRLSSKQNMDSAQPTKLDFLTVPATPFSIGVLASIVVLVTVVIGPKAVIDTVLNSYLSLVHRIPAADGKKYMSGPAYTFPNGQMVDKFLAARTRSWEWEEKYGKTYRIWAASIPEVVITDPKDVEVLYQQSTDHNKAPQANAGWLLTQLLGSGLGLINGTRWSTLRKTLDPMFSHRAALQYLRDSLDAGAQDYVAGIHQFAKADGQVQTADGKVMVINATQALQRYPFFEVASMFYGKMSEAEHERLWDLGRRYSEVFAAIVSGGIHRSKLTRYLNTKAWNNARDYQKAWRDFNREIYTARKMTAPDTPIVALTEAAERGELTPNEVTDTIAESTFANLDIVTHVISSCIILLADSPEVQNDLLQEMEKNKADRENYITRKDTLLHYCLLESLRLRPVLCLKEYWLTQVKAFTFPENPPREKILGNFVVPKDTTIIVDAFAINIRNPFWGPDNRAYRPSRFAGIKQSQLRYNLATFGYGPRKCLGQHIADKIVKAVVYHLFSKYRVSLMPMQAVEGDFKVDKTSWVALYDVDLKLEPRES</sequence>